<evidence type="ECO:0000255" key="1">
    <source>
        <dbReference type="HAMAP-Rule" id="MF_01342"/>
    </source>
</evidence>
<evidence type="ECO:0000305" key="2"/>
<comment type="function">
    <text evidence="1">Binds 23S rRNA and is also seen to make contacts with the A and possibly P site tRNAs.</text>
</comment>
<comment type="subunit">
    <text evidence="1">Part of the 50S ribosomal subunit.</text>
</comment>
<comment type="similarity">
    <text evidence="1">Belongs to the universal ribosomal protein uL16 family.</text>
</comment>
<sequence length="137" mass="15601">MLQPKRTKYRKQFKGRIKGVAKGGFDLAFGEFGLKSQEPNRVNAREIEAARRAITRYMKRAGRVWIRVFPDVPVTAKPTEVRMGKGKGSVEYWACKVKPGRMMFEIDGVTEEIAREALRLGAAKLSVKTRFVQRIAE</sequence>
<organism>
    <name type="scientific">Agrobacterium fabrum (strain C58 / ATCC 33970)</name>
    <name type="common">Agrobacterium tumefaciens (strain C58)</name>
    <dbReference type="NCBI Taxonomy" id="176299"/>
    <lineage>
        <taxon>Bacteria</taxon>
        <taxon>Pseudomonadati</taxon>
        <taxon>Pseudomonadota</taxon>
        <taxon>Alphaproteobacteria</taxon>
        <taxon>Hyphomicrobiales</taxon>
        <taxon>Rhizobiaceae</taxon>
        <taxon>Rhizobium/Agrobacterium group</taxon>
        <taxon>Agrobacterium</taxon>
        <taxon>Agrobacterium tumefaciens complex</taxon>
    </lineage>
</organism>
<feature type="chain" id="PRO_0000062029" description="Large ribosomal subunit protein uL16">
    <location>
        <begin position="1"/>
        <end position="137"/>
    </location>
</feature>
<gene>
    <name evidence="1" type="primary">rplP</name>
    <name type="ordered locus">Atu1939</name>
    <name type="ORF">AGR_C_3544</name>
</gene>
<dbReference type="EMBL" id="AE007869">
    <property type="protein sequence ID" value="AAK87701.1"/>
    <property type="molecule type" value="Genomic_DNA"/>
</dbReference>
<dbReference type="PIR" id="AI2814">
    <property type="entry name" value="AI2814"/>
</dbReference>
<dbReference type="PIR" id="D97593">
    <property type="entry name" value="D97593"/>
</dbReference>
<dbReference type="RefSeq" id="NP_354916.1">
    <property type="nucleotide sequence ID" value="NC_003062.2"/>
</dbReference>
<dbReference type="RefSeq" id="WP_006313973.1">
    <property type="nucleotide sequence ID" value="NC_003062.2"/>
</dbReference>
<dbReference type="SMR" id="Q8UE25"/>
<dbReference type="STRING" id="176299.Atu1939"/>
<dbReference type="EnsemblBacteria" id="AAK87701">
    <property type="protein sequence ID" value="AAK87701"/>
    <property type="gene ID" value="Atu1939"/>
</dbReference>
<dbReference type="GeneID" id="1133977"/>
<dbReference type="KEGG" id="atu:Atu1939"/>
<dbReference type="PATRIC" id="fig|176299.10.peg.1951"/>
<dbReference type="eggNOG" id="COG0197">
    <property type="taxonomic scope" value="Bacteria"/>
</dbReference>
<dbReference type="HOGENOM" id="CLU_078858_2_1_5"/>
<dbReference type="OrthoDB" id="9802589at2"/>
<dbReference type="PhylomeDB" id="Q8UE25"/>
<dbReference type="BioCyc" id="AGRO:ATU1939-MONOMER"/>
<dbReference type="Proteomes" id="UP000000813">
    <property type="component" value="Chromosome circular"/>
</dbReference>
<dbReference type="GO" id="GO:0022625">
    <property type="term" value="C:cytosolic large ribosomal subunit"/>
    <property type="evidence" value="ECO:0007669"/>
    <property type="project" value="TreeGrafter"/>
</dbReference>
<dbReference type="GO" id="GO:0019843">
    <property type="term" value="F:rRNA binding"/>
    <property type="evidence" value="ECO:0007669"/>
    <property type="project" value="UniProtKB-UniRule"/>
</dbReference>
<dbReference type="GO" id="GO:0003735">
    <property type="term" value="F:structural constituent of ribosome"/>
    <property type="evidence" value="ECO:0007669"/>
    <property type="project" value="InterPro"/>
</dbReference>
<dbReference type="GO" id="GO:0000049">
    <property type="term" value="F:tRNA binding"/>
    <property type="evidence" value="ECO:0007669"/>
    <property type="project" value="UniProtKB-KW"/>
</dbReference>
<dbReference type="GO" id="GO:0006412">
    <property type="term" value="P:translation"/>
    <property type="evidence" value="ECO:0007669"/>
    <property type="project" value="UniProtKB-UniRule"/>
</dbReference>
<dbReference type="CDD" id="cd01433">
    <property type="entry name" value="Ribosomal_L16_L10e"/>
    <property type="match status" value="1"/>
</dbReference>
<dbReference type="FunFam" id="3.90.1170.10:FF:000001">
    <property type="entry name" value="50S ribosomal protein L16"/>
    <property type="match status" value="1"/>
</dbReference>
<dbReference type="Gene3D" id="3.90.1170.10">
    <property type="entry name" value="Ribosomal protein L10e/L16"/>
    <property type="match status" value="1"/>
</dbReference>
<dbReference type="HAMAP" id="MF_01342">
    <property type="entry name" value="Ribosomal_uL16"/>
    <property type="match status" value="1"/>
</dbReference>
<dbReference type="InterPro" id="IPR047873">
    <property type="entry name" value="Ribosomal_uL16"/>
</dbReference>
<dbReference type="InterPro" id="IPR000114">
    <property type="entry name" value="Ribosomal_uL16_bact-type"/>
</dbReference>
<dbReference type="InterPro" id="IPR020798">
    <property type="entry name" value="Ribosomal_uL16_CS"/>
</dbReference>
<dbReference type="InterPro" id="IPR016180">
    <property type="entry name" value="Ribosomal_uL16_dom"/>
</dbReference>
<dbReference type="InterPro" id="IPR036920">
    <property type="entry name" value="Ribosomal_uL16_sf"/>
</dbReference>
<dbReference type="NCBIfam" id="TIGR01164">
    <property type="entry name" value="rplP_bact"/>
    <property type="match status" value="1"/>
</dbReference>
<dbReference type="PANTHER" id="PTHR12220">
    <property type="entry name" value="50S/60S RIBOSOMAL PROTEIN L16"/>
    <property type="match status" value="1"/>
</dbReference>
<dbReference type="PANTHER" id="PTHR12220:SF13">
    <property type="entry name" value="LARGE RIBOSOMAL SUBUNIT PROTEIN UL16M"/>
    <property type="match status" value="1"/>
</dbReference>
<dbReference type="Pfam" id="PF00252">
    <property type="entry name" value="Ribosomal_L16"/>
    <property type="match status" value="1"/>
</dbReference>
<dbReference type="PRINTS" id="PR00060">
    <property type="entry name" value="RIBOSOMALL16"/>
</dbReference>
<dbReference type="SUPFAM" id="SSF54686">
    <property type="entry name" value="Ribosomal protein L16p/L10e"/>
    <property type="match status" value="1"/>
</dbReference>
<dbReference type="PROSITE" id="PS00586">
    <property type="entry name" value="RIBOSOMAL_L16_1"/>
    <property type="match status" value="1"/>
</dbReference>
<dbReference type="PROSITE" id="PS00701">
    <property type="entry name" value="RIBOSOMAL_L16_2"/>
    <property type="match status" value="1"/>
</dbReference>
<accession>Q8UE25</accession>
<accession>Q7CY75</accession>
<keyword id="KW-1185">Reference proteome</keyword>
<keyword id="KW-0687">Ribonucleoprotein</keyword>
<keyword id="KW-0689">Ribosomal protein</keyword>
<keyword id="KW-0694">RNA-binding</keyword>
<keyword id="KW-0699">rRNA-binding</keyword>
<keyword id="KW-0820">tRNA-binding</keyword>
<proteinExistence type="inferred from homology"/>
<name>RL16_AGRFC</name>
<protein>
    <recommendedName>
        <fullName evidence="1">Large ribosomal subunit protein uL16</fullName>
    </recommendedName>
    <alternativeName>
        <fullName evidence="2">50S ribosomal protein L16</fullName>
    </alternativeName>
</protein>
<reference key="1">
    <citation type="journal article" date="2001" name="Science">
        <title>The genome of the natural genetic engineer Agrobacterium tumefaciens C58.</title>
        <authorList>
            <person name="Wood D.W."/>
            <person name="Setubal J.C."/>
            <person name="Kaul R."/>
            <person name="Monks D.E."/>
            <person name="Kitajima J.P."/>
            <person name="Okura V.K."/>
            <person name="Zhou Y."/>
            <person name="Chen L."/>
            <person name="Wood G.E."/>
            <person name="Almeida N.F. Jr."/>
            <person name="Woo L."/>
            <person name="Chen Y."/>
            <person name="Paulsen I.T."/>
            <person name="Eisen J.A."/>
            <person name="Karp P.D."/>
            <person name="Bovee D. Sr."/>
            <person name="Chapman P."/>
            <person name="Clendenning J."/>
            <person name="Deatherage G."/>
            <person name="Gillet W."/>
            <person name="Grant C."/>
            <person name="Kutyavin T."/>
            <person name="Levy R."/>
            <person name="Li M.-J."/>
            <person name="McClelland E."/>
            <person name="Palmieri A."/>
            <person name="Raymond C."/>
            <person name="Rouse G."/>
            <person name="Saenphimmachak C."/>
            <person name="Wu Z."/>
            <person name="Romero P."/>
            <person name="Gordon D."/>
            <person name="Zhang S."/>
            <person name="Yoo H."/>
            <person name="Tao Y."/>
            <person name="Biddle P."/>
            <person name="Jung M."/>
            <person name="Krespan W."/>
            <person name="Perry M."/>
            <person name="Gordon-Kamm B."/>
            <person name="Liao L."/>
            <person name="Kim S."/>
            <person name="Hendrick C."/>
            <person name="Zhao Z.-Y."/>
            <person name="Dolan M."/>
            <person name="Chumley F."/>
            <person name="Tingey S.V."/>
            <person name="Tomb J.-F."/>
            <person name="Gordon M.P."/>
            <person name="Olson M.V."/>
            <person name="Nester E.W."/>
        </authorList>
    </citation>
    <scope>NUCLEOTIDE SEQUENCE [LARGE SCALE GENOMIC DNA]</scope>
    <source>
        <strain>C58 / ATCC 33970</strain>
    </source>
</reference>
<reference key="2">
    <citation type="journal article" date="2001" name="Science">
        <title>Genome sequence of the plant pathogen and biotechnology agent Agrobacterium tumefaciens C58.</title>
        <authorList>
            <person name="Goodner B."/>
            <person name="Hinkle G."/>
            <person name="Gattung S."/>
            <person name="Miller N."/>
            <person name="Blanchard M."/>
            <person name="Qurollo B."/>
            <person name="Goldman B.S."/>
            <person name="Cao Y."/>
            <person name="Askenazi M."/>
            <person name="Halling C."/>
            <person name="Mullin L."/>
            <person name="Houmiel K."/>
            <person name="Gordon J."/>
            <person name="Vaudin M."/>
            <person name="Iartchouk O."/>
            <person name="Epp A."/>
            <person name="Liu F."/>
            <person name="Wollam C."/>
            <person name="Allinger M."/>
            <person name="Doughty D."/>
            <person name="Scott C."/>
            <person name="Lappas C."/>
            <person name="Markelz B."/>
            <person name="Flanagan C."/>
            <person name="Crowell C."/>
            <person name="Gurson J."/>
            <person name="Lomo C."/>
            <person name="Sear C."/>
            <person name="Strub G."/>
            <person name="Cielo C."/>
            <person name="Slater S."/>
        </authorList>
    </citation>
    <scope>NUCLEOTIDE SEQUENCE [LARGE SCALE GENOMIC DNA]</scope>
    <source>
        <strain>C58 / ATCC 33970</strain>
    </source>
</reference>